<protein>
    <recommendedName>
        <fullName evidence="1">Small ribosomal subunit protein uS4</fullName>
    </recommendedName>
    <alternativeName>
        <fullName evidence="3">30S ribosomal protein S4</fullName>
    </alternativeName>
</protein>
<feature type="chain" id="PRO_1000140779" description="Small ribosomal subunit protein uS4">
    <location>
        <begin position="1"/>
        <end position="207"/>
    </location>
</feature>
<feature type="domain" description="S4 RNA-binding" evidence="1">
    <location>
        <begin position="97"/>
        <end position="157"/>
    </location>
</feature>
<feature type="region of interest" description="Disordered" evidence="2">
    <location>
        <begin position="33"/>
        <end position="54"/>
    </location>
</feature>
<feature type="compositionally biased region" description="Polar residues" evidence="2">
    <location>
        <begin position="42"/>
        <end position="53"/>
    </location>
</feature>
<reference key="1">
    <citation type="submission" date="2008-05" db="EMBL/GenBank/DDBJ databases">
        <title>Complete sequence of chromosome 1 of Ralstonia pickettii 12J.</title>
        <authorList>
            <person name="Lucas S."/>
            <person name="Copeland A."/>
            <person name="Lapidus A."/>
            <person name="Glavina del Rio T."/>
            <person name="Dalin E."/>
            <person name="Tice H."/>
            <person name="Bruce D."/>
            <person name="Goodwin L."/>
            <person name="Pitluck S."/>
            <person name="Meincke L."/>
            <person name="Brettin T."/>
            <person name="Detter J.C."/>
            <person name="Han C."/>
            <person name="Kuske C.R."/>
            <person name="Schmutz J."/>
            <person name="Larimer F."/>
            <person name="Land M."/>
            <person name="Hauser L."/>
            <person name="Kyrpides N."/>
            <person name="Mikhailova N."/>
            <person name="Marsh T."/>
            <person name="Richardson P."/>
        </authorList>
    </citation>
    <scope>NUCLEOTIDE SEQUENCE [LARGE SCALE GENOMIC DNA]</scope>
    <source>
        <strain>12J</strain>
    </source>
</reference>
<evidence type="ECO:0000255" key="1">
    <source>
        <dbReference type="HAMAP-Rule" id="MF_01306"/>
    </source>
</evidence>
<evidence type="ECO:0000256" key="2">
    <source>
        <dbReference type="SAM" id="MobiDB-lite"/>
    </source>
</evidence>
<evidence type="ECO:0000305" key="3"/>
<keyword id="KW-0687">Ribonucleoprotein</keyword>
<keyword id="KW-0689">Ribosomal protein</keyword>
<keyword id="KW-0694">RNA-binding</keyword>
<keyword id="KW-0699">rRNA-binding</keyword>
<comment type="function">
    <text evidence="1">One of the primary rRNA binding proteins, it binds directly to 16S rRNA where it nucleates assembly of the body of the 30S subunit.</text>
</comment>
<comment type="function">
    <text evidence="1">With S5 and S12 plays an important role in translational accuracy.</text>
</comment>
<comment type="subunit">
    <text evidence="1">Part of the 30S ribosomal subunit. Contacts protein S5. The interaction surface between S4 and S5 is involved in control of translational fidelity.</text>
</comment>
<comment type="similarity">
    <text evidence="1">Belongs to the universal ribosomal protein uS4 family.</text>
</comment>
<name>RS4_RALPJ</name>
<sequence>MARYTGPKAKLSRREGTDLFLKSARRSLADKCKLDSKPGQHGRTSGARTSDYGNQLREKQKVKRIYGVLERQFRRYFAEADRRKGNTGETLLQLLESRLDNVVYRMGFGSTRAEARQLVSHKAILVNGQALNVPSAQVKSGDVIAIREKSKKQVRIAESLTLAEQSGFPIWVAVDAKKMEGTFKQAPDRADIAGDINESLIVELYSR</sequence>
<proteinExistence type="inferred from homology"/>
<organism>
    <name type="scientific">Ralstonia pickettii (strain 12J)</name>
    <dbReference type="NCBI Taxonomy" id="402626"/>
    <lineage>
        <taxon>Bacteria</taxon>
        <taxon>Pseudomonadati</taxon>
        <taxon>Pseudomonadota</taxon>
        <taxon>Betaproteobacteria</taxon>
        <taxon>Burkholderiales</taxon>
        <taxon>Burkholderiaceae</taxon>
        <taxon>Ralstonia</taxon>
    </lineage>
</organism>
<gene>
    <name evidence="1" type="primary">rpsD</name>
    <name type="ordered locus">Rpic_3272</name>
</gene>
<accession>B2UEJ4</accession>
<dbReference type="EMBL" id="CP001068">
    <property type="protein sequence ID" value="ACD28394.1"/>
    <property type="molecule type" value="Genomic_DNA"/>
</dbReference>
<dbReference type="SMR" id="B2UEJ4"/>
<dbReference type="STRING" id="402626.Rpic_3272"/>
<dbReference type="KEGG" id="rpi:Rpic_3272"/>
<dbReference type="eggNOG" id="COG0522">
    <property type="taxonomic scope" value="Bacteria"/>
</dbReference>
<dbReference type="HOGENOM" id="CLU_092403_0_2_4"/>
<dbReference type="GO" id="GO:0015935">
    <property type="term" value="C:small ribosomal subunit"/>
    <property type="evidence" value="ECO:0007669"/>
    <property type="project" value="InterPro"/>
</dbReference>
<dbReference type="GO" id="GO:0019843">
    <property type="term" value="F:rRNA binding"/>
    <property type="evidence" value="ECO:0007669"/>
    <property type="project" value="UniProtKB-UniRule"/>
</dbReference>
<dbReference type="GO" id="GO:0003735">
    <property type="term" value="F:structural constituent of ribosome"/>
    <property type="evidence" value="ECO:0007669"/>
    <property type="project" value="InterPro"/>
</dbReference>
<dbReference type="GO" id="GO:0042274">
    <property type="term" value="P:ribosomal small subunit biogenesis"/>
    <property type="evidence" value="ECO:0007669"/>
    <property type="project" value="TreeGrafter"/>
</dbReference>
<dbReference type="GO" id="GO:0006412">
    <property type="term" value="P:translation"/>
    <property type="evidence" value="ECO:0007669"/>
    <property type="project" value="UniProtKB-UniRule"/>
</dbReference>
<dbReference type="CDD" id="cd00165">
    <property type="entry name" value="S4"/>
    <property type="match status" value="1"/>
</dbReference>
<dbReference type="FunFam" id="1.10.1050.10:FF:000001">
    <property type="entry name" value="30S ribosomal protein S4"/>
    <property type="match status" value="1"/>
</dbReference>
<dbReference type="FunFam" id="3.10.290.10:FF:000001">
    <property type="entry name" value="30S ribosomal protein S4"/>
    <property type="match status" value="1"/>
</dbReference>
<dbReference type="Gene3D" id="1.10.1050.10">
    <property type="entry name" value="Ribosomal Protein S4 Delta 41, Chain A, domain 1"/>
    <property type="match status" value="1"/>
</dbReference>
<dbReference type="Gene3D" id="3.10.290.10">
    <property type="entry name" value="RNA-binding S4 domain"/>
    <property type="match status" value="1"/>
</dbReference>
<dbReference type="HAMAP" id="MF_01306_B">
    <property type="entry name" value="Ribosomal_uS4_B"/>
    <property type="match status" value="1"/>
</dbReference>
<dbReference type="InterPro" id="IPR022801">
    <property type="entry name" value="Ribosomal_uS4"/>
</dbReference>
<dbReference type="InterPro" id="IPR005709">
    <property type="entry name" value="Ribosomal_uS4_bac-type"/>
</dbReference>
<dbReference type="InterPro" id="IPR018079">
    <property type="entry name" value="Ribosomal_uS4_CS"/>
</dbReference>
<dbReference type="InterPro" id="IPR001912">
    <property type="entry name" value="Ribosomal_uS4_N"/>
</dbReference>
<dbReference type="InterPro" id="IPR002942">
    <property type="entry name" value="S4_RNA-bd"/>
</dbReference>
<dbReference type="InterPro" id="IPR036986">
    <property type="entry name" value="S4_RNA-bd_sf"/>
</dbReference>
<dbReference type="NCBIfam" id="NF003717">
    <property type="entry name" value="PRK05327.1"/>
    <property type="match status" value="1"/>
</dbReference>
<dbReference type="NCBIfam" id="TIGR01017">
    <property type="entry name" value="rpsD_bact"/>
    <property type="match status" value="1"/>
</dbReference>
<dbReference type="PANTHER" id="PTHR11831">
    <property type="entry name" value="30S 40S RIBOSOMAL PROTEIN"/>
    <property type="match status" value="1"/>
</dbReference>
<dbReference type="PANTHER" id="PTHR11831:SF4">
    <property type="entry name" value="SMALL RIBOSOMAL SUBUNIT PROTEIN US4M"/>
    <property type="match status" value="1"/>
</dbReference>
<dbReference type="Pfam" id="PF00163">
    <property type="entry name" value="Ribosomal_S4"/>
    <property type="match status" value="1"/>
</dbReference>
<dbReference type="Pfam" id="PF01479">
    <property type="entry name" value="S4"/>
    <property type="match status" value="1"/>
</dbReference>
<dbReference type="SMART" id="SM01390">
    <property type="entry name" value="Ribosomal_S4"/>
    <property type="match status" value="1"/>
</dbReference>
<dbReference type="SMART" id="SM00363">
    <property type="entry name" value="S4"/>
    <property type="match status" value="1"/>
</dbReference>
<dbReference type="SUPFAM" id="SSF55174">
    <property type="entry name" value="Alpha-L RNA-binding motif"/>
    <property type="match status" value="1"/>
</dbReference>
<dbReference type="PROSITE" id="PS00632">
    <property type="entry name" value="RIBOSOMAL_S4"/>
    <property type="match status" value="1"/>
</dbReference>
<dbReference type="PROSITE" id="PS50889">
    <property type="entry name" value="S4"/>
    <property type="match status" value="1"/>
</dbReference>